<comment type="function">
    <text evidence="1">Specifically methylates the adenine in position 1618 of 23S rRNA.</text>
</comment>
<comment type="catalytic activity">
    <reaction evidence="1">
        <text>adenosine(1618) in 23S rRNA + S-adenosyl-L-methionine = N(6)-methyladenosine(1618) in 23S rRNA + S-adenosyl-L-homocysteine + H(+)</text>
        <dbReference type="Rhea" id="RHEA:16497"/>
        <dbReference type="Rhea" id="RHEA-COMP:10229"/>
        <dbReference type="Rhea" id="RHEA-COMP:10231"/>
        <dbReference type="ChEBI" id="CHEBI:15378"/>
        <dbReference type="ChEBI" id="CHEBI:57856"/>
        <dbReference type="ChEBI" id="CHEBI:59789"/>
        <dbReference type="ChEBI" id="CHEBI:74411"/>
        <dbReference type="ChEBI" id="CHEBI:74449"/>
        <dbReference type="EC" id="2.1.1.181"/>
    </reaction>
</comment>
<comment type="subcellular location">
    <subcellularLocation>
        <location evidence="1">Cytoplasm</location>
    </subcellularLocation>
</comment>
<comment type="similarity">
    <text evidence="1">Belongs to the methyltransferase superfamily. METTL16/RlmF family.</text>
</comment>
<gene>
    <name evidence="1" type="primary">rlmF</name>
    <name type="ordered locus">YPA_2011</name>
</gene>
<proteinExistence type="inferred from homology"/>
<reference key="1">
    <citation type="journal article" date="2006" name="J. Bacteriol.">
        <title>Complete genome sequence of Yersinia pestis strains Antiqua and Nepal516: evidence of gene reduction in an emerging pathogen.</title>
        <authorList>
            <person name="Chain P.S.G."/>
            <person name="Hu P."/>
            <person name="Malfatti S.A."/>
            <person name="Radnedge L."/>
            <person name="Larimer F."/>
            <person name="Vergez L.M."/>
            <person name="Worsham P."/>
            <person name="Chu M.C."/>
            <person name="Andersen G.L."/>
        </authorList>
    </citation>
    <scope>NUCLEOTIDE SEQUENCE [LARGE SCALE GENOMIC DNA]</scope>
    <source>
        <strain>Antiqua</strain>
    </source>
</reference>
<feature type="chain" id="PRO_0000349984" description="Ribosomal RNA large subunit methyltransferase F">
    <location>
        <begin position="1"/>
        <end position="336"/>
    </location>
</feature>
<accession>Q1C6E5</accession>
<sequence length="336" mass="37477">MLSYAPENAYQRASTMENKKVFPKEKSGLHPRNRHCSRYDFDALSVSCPELIPFLAPTAYGDISVDFADPLAVKMLNKALLKHFYGIEYWDIPADSLCPPIPGRADYVHHLADLLASCNGEVIPKGKNIALLDIGVGANCIYPIIGQREYGWRFTGTDIDSHALSAAKMVVSMNPTLKNTLRLKQQKDPHAIFEGVWAVNERYDATLCNPPFHGSAEEAAATTRRKLHKLGKNEVAAKPVQNFGGKNSELWCEGGEEGFVSRMVAESVAKAQNCFWFTSLISKKTTLPAIYHALRYVKAVEVRTIEMAQGQKVSRFVAWTFLTPEQQAAWVAERWA</sequence>
<evidence type="ECO:0000255" key="1">
    <source>
        <dbReference type="HAMAP-Rule" id="MF_01848"/>
    </source>
</evidence>
<keyword id="KW-0963">Cytoplasm</keyword>
<keyword id="KW-0489">Methyltransferase</keyword>
<keyword id="KW-0698">rRNA processing</keyword>
<keyword id="KW-0949">S-adenosyl-L-methionine</keyword>
<keyword id="KW-0808">Transferase</keyword>
<name>RLMF_YERPA</name>
<dbReference type="EC" id="2.1.1.181" evidence="1"/>
<dbReference type="EMBL" id="CP000308">
    <property type="protein sequence ID" value="ABG13977.1"/>
    <property type="molecule type" value="Genomic_DNA"/>
</dbReference>
<dbReference type="SMR" id="Q1C6E5"/>
<dbReference type="KEGG" id="ypa:YPA_2011"/>
<dbReference type="Proteomes" id="UP000001971">
    <property type="component" value="Chromosome"/>
</dbReference>
<dbReference type="GO" id="GO:0005737">
    <property type="term" value="C:cytoplasm"/>
    <property type="evidence" value="ECO:0007669"/>
    <property type="project" value="UniProtKB-SubCell"/>
</dbReference>
<dbReference type="GO" id="GO:0052907">
    <property type="term" value="F:23S rRNA (adenine(1618)-N(6))-methyltransferase activity"/>
    <property type="evidence" value="ECO:0007669"/>
    <property type="project" value="UniProtKB-EC"/>
</dbReference>
<dbReference type="GO" id="GO:0070475">
    <property type="term" value="P:rRNA base methylation"/>
    <property type="evidence" value="ECO:0007669"/>
    <property type="project" value="TreeGrafter"/>
</dbReference>
<dbReference type="CDD" id="cd02440">
    <property type="entry name" value="AdoMet_MTases"/>
    <property type="match status" value="1"/>
</dbReference>
<dbReference type="FunFam" id="3.40.50.150:FF:000045">
    <property type="entry name" value="Ribosomal RNA large subunit methyltransferase F"/>
    <property type="match status" value="1"/>
</dbReference>
<dbReference type="Gene3D" id="3.40.50.150">
    <property type="entry name" value="Vaccinia Virus protein VP39"/>
    <property type="match status" value="1"/>
</dbReference>
<dbReference type="HAMAP" id="MF_01848">
    <property type="entry name" value="23SrRNA_methyltr_F"/>
    <property type="match status" value="1"/>
</dbReference>
<dbReference type="InterPro" id="IPR010286">
    <property type="entry name" value="METTL16/RlmF"/>
</dbReference>
<dbReference type="InterPro" id="IPR016909">
    <property type="entry name" value="rRNA_lsu_MeTfrase_F"/>
</dbReference>
<dbReference type="InterPro" id="IPR029063">
    <property type="entry name" value="SAM-dependent_MTases_sf"/>
</dbReference>
<dbReference type="NCBIfam" id="NF008725">
    <property type="entry name" value="PRK11727.1"/>
    <property type="match status" value="1"/>
</dbReference>
<dbReference type="PANTHER" id="PTHR13393:SF0">
    <property type="entry name" value="RNA N6-ADENOSINE-METHYLTRANSFERASE METTL16"/>
    <property type="match status" value="1"/>
</dbReference>
<dbReference type="PANTHER" id="PTHR13393">
    <property type="entry name" value="SAM-DEPENDENT METHYLTRANSFERASE"/>
    <property type="match status" value="1"/>
</dbReference>
<dbReference type="Pfam" id="PF05971">
    <property type="entry name" value="Methyltransf_10"/>
    <property type="match status" value="1"/>
</dbReference>
<dbReference type="PIRSF" id="PIRSF029038">
    <property type="entry name" value="Mtase_YbiN_prd"/>
    <property type="match status" value="1"/>
</dbReference>
<dbReference type="SUPFAM" id="SSF53335">
    <property type="entry name" value="S-adenosyl-L-methionine-dependent methyltransferases"/>
    <property type="match status" value="1"/>
</dbReference>
<organism>
    <name type="scientific">Yersinia pestis bv. Antiqua (strain Antiqua)</name>
    <dbReference type="NCBI Taxonomy" id="360102"/>
    <lineage>
        <taxon>Bacteria</taxon>
        <taxon>Pseudomonadati</taxon>
        <taxon>Pseudomonadota</taxon>
        <taxon>Gammaproteobacteria</taxon>
        <taxon>Enterobacterales</taxon>
        <taxon>Yersiniaceae</taxon>
        <taxon>Yersinia</taxon>
    </lineage>
</organism>
<protein>
    <recommendedName>
        <fullName evidence="1">Ribosomal RNA large subunit methyltransferase F</fullName>
        <ecNumber evidence="1">2.1.1.181</ecNumber>
    </recommendedName>
    <alternativeName>
        <fullName evidence="1">23S rRNA mA1618 methyltransferase</fullName>
    </alternativeName>
    <alternativeName>
        <fullName evidence="1">rRNA adenine N-6-methyltransferase</fullName>
    </alternativeName>
</protein>